<feature type="signal peptide" evidence="1">
    <location>
        <begin position="1"/>
        <end position="25"/>
    </location>
</feature>
<feature type="chain" id="PRO_0000290219" description="Maltoporin">
    <location>
        <begin position="26"/>
        <end position="446"/>
    </location>
</feature>
<feature type="site" description="Greasy slide, important in sugar transport" evidence="1">
    <location>
        <position position="31"/>
    </location>
</feature>
<feature type="site" description="Greasy slide, important in sugar transport" evidence="1">
    <location>
        <position position="66"/>
    </location>
</feature>
<feature type="site" description="Greasy slide, important in sugar transport" evidence="1">
    <location>
        <position position="99"/>
    </location>
</feature>
<feature type="site" description="Important in sugar transport" evidence="1">
    <location>
        <position position="143"/>
    </location>
</feature>
<feature type="site" description="Greasy slide, important in sugar transport" evidence="1">
    <location>
        <position position="252"/>
    </location>
</feature>
<feature type="site" description="Greasy slide, important in sugar transport" evidence="1">
    <location>
        <position position="383"/>
    </location>
</feature>
<feature type="site" description="Greasy slide, important in sugar transport" evidence="1">
    <location>
        <position position="445"/>
    </location>
</feature>
<proteinExistence type="inferred from homology"/>
<gene>
    <name evidence="1" type="primary">lamB</name>
    <name type="ordered locus">ECP_4254</name>
</gene>
<protein>
    <recommendedName>
        <fullName evidence="1">Maltoporin</fullName>
    </recommendedName>
    <alternativeName>
        <fullName evidence="1">Maltose-inducible porin</fullName>
    </alternativeName>
</protein>
<dbReference type="EMBL" id="CP000247">
    <property type="protein sequence ID" value="ABG72204.1"/>
    <property type="molecule type" value="Genomic_DNA"/>
</dbReference>
<dbReference type="RefSeq" id="WP_000973646.1">
    <property type="nucleotide sequence ID" value="NC_008253.1"/>
</dbReference>
<dbReference type="SMR" id="Q0TA25"/>
<dbReference type="KEGG" id="ecp:ECP_4254"/>
<dbReference type="HOGENOM" id="CLU_032473_4_1_6"/>
<dbReference type="Proteomes" id="UP000009182">
    <property type="component" value="Chromosome"/>
</dbReference>
<dbReference type="GO" id="GO:0009279">
    <property type="term" value="C:cell outer membrane"/>
    <property type="evidence" value="ECO:0007669"/>
    <property type="project" value="UniProtKB-SubCell"/>
</dbReference>
<dbReference type="GO" id="GO:0046930">
    <property type="term" value="C:pore complex"/>
    <property type="evidence" value="ECO:0007669"/>
    <property type="project" value="UniProtKB-KW"/>
</dbReference>
<dbReference type="GO" id="GO:0042958">
    <property type="term" value="F:maltodextrin transmembrane transporter activity"/>
    <property type="evidence" value="ECO:0007669"/>
    <property type="project" value="InterPro"/>
</dbReference>
<dbReference type="GO" id="GO:0015481">
    <property type="term" value="F:maltose transporting porin activity"/>
    <property type="evidence" value="ECO:0007669"/>
    <property type="project" value="InterPro"/>
</dbReference>
<dbReference type="GO" id="GO:0006811">
    <property type="term" value="P:monoatomic ion transport"/>
    <property type="evidence" value="ECO:0007669"/>
    <property type="project" value="UniProtKB-KW"/>
</dbReference>
<dbReference type="CDD" id="cd01346">
    <property type="entry name" value="Maltoporin-like"/>
    <property type="match status" value="1"/>
</dbReference>
<dbReference type="FunFam" id="2.40.170.10:FF:000001">
    <property type="entry name" value="Maltoporin"/>
    <property type="match status" value="1"/>
</dbReference>
<dbReference type="Gene3D" id="2.40.170.10">
    <property type="entry name" value="Porin, LamB type"/>
    <property type="match status" value="1"/>
</dbReference>
<dbReference type="HAMAP" id="MF_01301">
    <property type="entry name" value="LamB"/>
    <property type="match status" value="1"/>
</dbReference>
<dbReference type="InterPro" id="IPR050286">
    <property type="entry name" value="G_neg_Bact_CarbUptk_Porin"/>
</dbReference>
<dbReference type="InterPro" id="IPR023738">
    <property type="entry name" value="Maltoporin"/>
</dbReference>
<dbReference type="InterPro" id="IPR003192">
    <property type="entry name" value="Porin_LamB"/>
</dbReference>
<dbReference type="InterPro" id="IPR036998">
    <property type="entry name" value="Porin_LamB_sf"/>
</dbReference>
<dbReference type="NCBIfam" id="NF006860">
    <property type="entry name" value="PRK09360.1"/>
    <property type="match status" value="1"/>
</dbReference>
<dbReference type="PANTHER" id="PTHR38762">
    <property type="entry name" value="CRYPTIC OUTER MEMBRANE PORIN BGLH-RELATED"/>
    <property type="match status" value="1"/>
</dbReference>
<dbReference type="PANTHER" id="PTHR38762:SF1">
    <property type="entry name" value="CRYPTIC OUTER MEMBRANE PORIN BGLH-RELATED"/>
    <property type="match status" value="1"/>
</dbReference>
<dbReference type="Pfam" id="PF02264">
    <property type="entry name" value="LamB"/>
    <property type="match status" value="1"/>
</dbReference>
<dbReference type="SUPFAM" id="SSF56935">
    <property type="entry name" value="Porins"/>
    <property type="match status" value="1"/>
</dbReference>
<keyword id="KW-0998">Cell outer membrane</keyword>
<keyword id="KW-0406">Ion transport</keyword>
<keyword id="KW-0472">Membrane</keyword>
<keyword id="KW-0626">Porin</keyword>
<keyword id="KW-0732">Signal</keyword>
<keyword id="KW-0762">Sugar transport</keyword>
<keyword id="KW-0812">Transmembrane</keyword>
<keyword id="KW-1134">Transmembrane beta strand</keyword>
<keyword id="KW-0813">Transport</keyword>
<accession>Q0TA25</accession>
<organism>
    <name type="scientific">Escherichia coli O6:K15:H31 (strain 536 / UPEC)</name>
    <dbReference type="NCBI Taxonomy" id="362663"/>
    <lineage>
        <taxon>Bacteria</taxon>
        <taxon>Pseudomonadati</taxon>
        <taxon>Pseudomonadota</taxon>
        <taxon>Gammaproteobacteria</taxon>
        <taxon>Enterobacterales</taxon>
        <taxon>Enterobacteriaceae</taxon>
        <taxon>Escherichia</taxon>
    </lineage>
</organism>
<name>LAMB_ECOL5</name>
<evidence type="ECO:0000255" key="1">
    <source>
        <dbReference type="HAMAP-Rule" id="MF_01301"/>
    </source>
</evidence>
<comment type="function">
    <text evidence="1">Involved in the transport of maltose and maltodextrins.</text>
</comment>
<comment type="catalytic activity">
    <reaction evidence="1">
        <text>beta-maltose(in) = beta-maltose(out)</text>
        <dbReference type="Rhea" id="RHEA:29731"/>
        <dbReference type="ChEBI" id="CHEBI:18147"/>
    </reaction>
</comment>
<comment type="subunit">
    <text evidence="1">Homotrimer formed of three 18-stranded antiparallel beta-barrels, containing three independent channels.</text>
</comment>
<comment type="subcellular location">
    <subcellularLocation>
        <location evidence="1">Cell outer membrane</location>
        <topology evidence="1">Multi-pass membrane protein</topology>
    </subcellularLocation>
</comment>
<comment type="induction">
    <text evidence="1">By maltose.</text>
</comment>
<comment type="similarity">
    <text evidence="1">Belongs to the porin LamB (TC 1.B.3) family.</text>
</comment>
<reference key="1">
    <citation type="journal article" date="2006" name="Mol. Microbiol.">
        <title>Role of pathogenicity island-associated integrases in the genome plasticity of uropathogenic Escherichia coli strain 536.</title>
        <authorList>
            <person name="Hochhut B."/>
            <person name="Wilde C."/>
            <person name="Balling G."/>
            <person name="Middendorf B."/>
            <person name="Dobrindt U."/>
            <person name="Brzuszkiewicz E."/>
            <person name="Gottschalk G."/>
            <person name="Carniel E."/>
            <person name="Hacker J."/>
        </authorList>
    </citation>
    <scope>NUCLEOTIDE SEQUENCE [LARGE SCALE GENOMIC DNA]</scope>
    <source>
        <strain>536 / UPEC</strain>
    </source>
</reference>
<sequence>MMITLRKLPLAVAVAAGVMSAQAMAVDFHGYARSGIGWTGSGGEQQCFQTTGAQSKYRLGNECETYAELKLGQEVWKEGDKSFYFDTNVAYSVAQKNDWEATDPAFREANVQGKNLIEWLPGSTIWAGKRFYQRHDVHMIDFYYWDISGPGAGLENIDVGFGKLSLAATRSSEAGGSSSFASNNIYDYTNETANDVFDVRLAQMEINPGGTLELGVDYGRANLRDNYRLVDGASKDGWLFTAEHTQSVLKGFNKFVVQYATDSMTSQGKGLSQGSGVAFDNEKFAYNINNNGHMLRILDHGAISMGDNWDMMYVGMYQDINWDNDNGTKWWTVGIRPMYKWTPIMSTVMEIGYDNVESQRTGDKNNQYKITLAQQWQAGDSIWSRPAIRVFATYAKWDEKWGYDYTGSSSTNPYYGKAVSADFNGGSFGRGDSDEWTFGAQMEIWW</sequence>